<proteinExistence type="inferred from homology"/>
<organism>
    <name type="scientific">Staphylococcus aureus (strain MRSA252)</name>
    <dbReference type="NCBI Taxonomy" id="282458"/>
    <lineage>
        <taxon>Bacteria</taxon>
        <taxon>Bacillati</taxon>
        <taxon>Bacillota</taxon>
        <taxon>Bacilli</taxon>
        <taxon>Bacillales</taxon>
        <taxon>Staphylococcaceae</taxon>
        <taxon>Staphylococcus</taxon>
    </lineage>
</organism>
<sequence>MLFGRLTERAQRVLAHAQEEAIRLNHSNIGTEHLLLGLMKEPEGIAAKVLESFNITEDKVIEEVEKLIGHGQDHVGTLHYTPRAKKVIELSMDEARKLHHNFVGTEHILLGLIRENEGVAARVFANLDLNITKARAQVVKALGNPEMSNKNAQASKSNNTPTLDSLARDLTVIAKDGTLDPVIGRDKEITRVIEVLSRRTKNNPVLIGEPGVGKTAIAEGLAQAIVNNEVPETLKDKRVMSLDMGTVVAGTKYRGEFEERLKKVMEEIQQAGNVILFIDELHTLVGAGGAEGAIDASNILKPALARGELQCIGATTLDEYRKNIEKDAALERRFQPVQVDEPSVVDTVAILKGLRDRYEAHHRINISDEAIEAAVKLSNRYVSDRFLPDKAIDLIDEASSKVRLKSHTTPNNLKEIEQEIEKVKNEKDAAVHAQEFENAANLRDKQTKLEKQYEEAKNEWKNAQNGMSTSLSEEDIAEVIAGWTGIPLTKINETESEKLLSLEDTLHERVIGQKDAVNSISKAVRRARAGLKDPKRPIGSFIFLGPTGVGKTELARALAESMFGDDDAMIRVDMSEFMEKHAVSRLVGAPPGYVGHDDGGQLTEKVRRKPYSVILFDEIEKAHPDVFNILLQVLDDGHLTDTKGRTVDFRNTIIIMTSNVGAQELQDQRFAGFGGSSDGQDYETIRKTMLKELKNSFRPEFLNRVDDIIVFHKLTKEELKEIVTMMVNKLTNRLSEQNINIIVTDKAKDKIAEEGYDPEYGARPLIRAIQKTIEDNLSELILDGNQIEGKKVTVDHDGKEFKYDIAEQTSETKTPSQA</sequence>
<dbReference type="EMBL" id="BX571856">
    <property type="protein sequence ID" value="CAG39550.1"/>
    <property type="molecule type" value="Genomic_DNA"/>
</dbReference>
<dbReference type="RefSeq" id="WP_000897132.1">
    <property type="nucleotide sequence ID" value="NC_002952.2"/>
</dbReference>
<dbReference type="SMR" id="Q6GJE4"/>
<dbReference type="KEGG" id="sar:SAR0528"/>
<dbReference type="HOGENOM" id="CLU_005070_4_1_9"/>
<dbReference type="Proteomes" id="UP000000596">
    <property type="component" value="Chromosome"/>
</dbReference>
<dbReference type="GO" id="GO:0005737">
    <property type="term" value="C:cytoplasm"/>
    <property type="evidence" value="ECO:0007669"/>
    <property type="project" value="TreeGrafter"/>
</dbReference>
<dbReference type="GO" id="GO:0005524">
    <property type="term" value="F:ATP binding"/>
    <property type="evidence" value="ECO:0007669"/>
    <property type="project" value="UniProtKB-KW"/>
</dbReference>
<dbReference type="GO" id="GO:0016887">
    <property type="term" value="F:ATP hydrolysis activity"/>
    <property type="evidence" value="ECO:0007669"/>
    <property type="project" value="InterPro"/>
</dbReference>
<dbReference type="GO" id="GO:0034605">
    <property type="term" value="P:cellular response to heat"/>
    <property type="evidence" value="ECO:0007669"/>
    <property type="project" value="TreeGrafter"/>
</dbReference>
<dbReference type="CDD" id="cd00009">
    <property type="entry name" value="AAA"/>
    <property type="match status" value="1"/>
</dbReference>
<dbReference type="CDD" id="cd19499">
    <property type="entry name" value="RecA-like_ClpB_Hsp104-like"/>
    <property type="match status" value="1"/>
</dbReference>
<dbReference type="FunFam" id="1.10.8.60:FF:000017">
    <property type="entry name" value="ATP-dependent chaperone ClpB"/>
    <property type="match status" value="1"/>
</dbReference>
<dbReference type="FunFam" id="1.10.8.60:FF:000011">
    <property type="entry name" value="ATP-dependent Clp protease ATP-binding subunit"/>
    <property type="match status" value="1"/>
</dbReference>
<dbReference type="FunFam" id="3.40.50.300:FF:000025">
    <property type="entry name" value="ATP-dependent Clp protease subunit"/>
    <property type="match status" value="1"/>
</dbReference>
<dbReference type="FunFam" id="3.40.50.300:FF:000010">
    <property type="entry name" value="Chaperone clpB 1, putative"/>
    <property type="match status" value="1"/>
</dbReference>
<dbReference type="Gene3D" id="1.10.8.60">
    <property type="match status" value="2"/>
</dbReference>
<dbReference type="Gene3D" id="1.10.1780.10">
    <property type="entry name" value="Clp, N-terminal domain"/>
    <property type="match status" value="1"/>
</dbReference>
<dbReference type="Gene3D" id="3.40.50.300">
    <property type="entry name" value="P-loop containing nucleotide triphosphate hydrolases"/>
    <property type="match status" value="2"/>
</dbReference>
<dbReference type="Gene3D" id="4.10.860.10">
    <property type="entry name" value="UVR domain"/>
    <property type="match status" value="1"/>
</dbReference>
<dbReference type="InterPro" id="IPR003593">
    <property type="entry name" value="AAA+_ATPase"/>
</dbReference>
<dbReference type="InterPro" id="IPR003959">
    <property type="entry name" value="ATPase_AAA_core"/>
</dbReference>
<dbReference type="InterPro" id="IPR019489">
    <property type="entry name" value="Clp_ATPase_C"/>
</dbReference>
<dbReference type="InterPro" id="IPR036628">
    <property type="entry name" value="Clp_N_dom_sf"/>
</dbReference>
<dbReference type="InterPro" id="IPR004176">
    <property type="entry name" value="Clp_R_dom"/>
</dbReference>
<dbReference type="InterPro" id="IPR001270">
    <property type="entry name" value="ClpA/B"/>
</dbReference>
<dbReference type="InterPro" id="IPR018368">
    <property type="entry name" value="ClpA/B_CS1"/>
</dbReference>
<dbReference type="InterPro" id="IPR028299">
    <property type="entry name" value="ClpA/B_CS2"/>
</dbReference>
<dbReference type="InterPro" id="IPR041546">
    <property type="entry name" value="ClpA/ClpB_AAA_lid"/>
</dbReference>
<dbReference type="InterPro" id="IPR050130">
    <property type="entry name" value="ClpA_ClpB"/>
</dbReference>
<dbReference type="InterPro" id="IPR027417">
    <property type="entry name" value="P-loop_NTPase"/>
</dbReference>
<dbReference type="InterPro" id="IPR001943">
    <property type="entry name" value="UVR_dom"/>
</dbReference>
<dbReference type="PANTHER" id="PTHR11638">
    <property type="entry name" value="ATP-DEPENDENT CLP PROTEASE"/>
    <property type="match status" value="1"/>
</dbReference>
<dbReference type="PANTHER" id="PTHR11638:SF18">
    <property type="entry name" value="HEAT SHOCK PROTEIN 104"/>
    <property type="match status" value="1"/>
</dbReference>
<dbReference type="Pfam" id="PF00004">
    <property type="entry name" value="AAA"/>
    <property type="match status" value="1"/>
</dbReference>
<dbReference type="Pfam" id="PF07724">
    <property type="entry name" value="AAA_2"/>
    <property type="match status" value="1"/>
</dbReference>
<dbReference type="Pfam" id="PF17871">
    <property type="entry name" value="AAA_lid_9"/>
    <property type="match status" value="1"/>
</dbReference>
<dbReference type="Pfam" id="PF02861">
    <property type="entry name" value="Clp_N"/>
    <property type="match status" value="2"/>
</dbReference>
<dbReference type="Pfam" id="PF10431">
    <property type="entry name" value="ClpB_D2-small"/>
    <property type="match status" value="1"/>
</dbReference>
<dbReference type="PRINTS" id="PR00300">
    <property type="entry name" value="CLPPROTEASEA"/>
</dbReference>
<dbReference type="SMART" id="SM00382">
    <property type="entry name" value="AAA"/>
    <property type="match status" value="2"/>
</dbReference>
<dbReference type="SMART" id="SM01086">
    <property type="entry name" value="ClpB_D2-small"/>
    <property type="match status" value="1"/>
</dbReference>
<dbReference type="SUPFAM" id="SSF81923">
    <property type="entry name" value="Double Clp-N motif"/>
    <property type="match status" value="1"/>
</dbReference>
<dbReference type="SUPFAM" id="SSF52540">
    <property type="entry name" value="P-loop containing nucleoside triphosphate hydrolases"/>
    <property type="match status" value="2"/>
</dbReference>
<dbReference type="PROSITE" id="PS51903">
    <property type="entry name" value="CLP_R"/>
    <property type="match status" value="1"/>
</dbReference>
<dbReference type="PROSITE" id="PS00870">
    <property type="entry name" value="CLPAB_1"/>
    <property type="match status" value="1"/>
</dbReference>
<dbReference type="PROSITE" id="PS00871">
    <property type="entry name" value="CLPAB_2"/>
    <property type="match status" value="1"/>
</dbReference>
<dbReference type="PROSITE" id="PS50151">
    <property type="entry name" value="UVR"/>
    <property type="match status" value="1"/>
</dbReference>
<accession>Q6GJE4</accession>
<evidence type="ECO:0000250" key="1"/>
<evidence type="ECO:0000255" key="2"/>
<evidence type="ECO:0000255" key="3">
    <source>
        <dbReference type="PROSITE-ProRule" id="PRU00217"/>
    </source>
</evidence>
<evidence type="ECO:0000255" key="4">
    <source>
        <dbReference type="PROSITE-ProRule" id="PRU01251"/>
    </source>
</evidence>
<evidence type="ECO:0000305" key="5"/>
<name>CLPC_STAAR</name>
<reference key="1">
    <citation type="journal article" date="2004" name="Proc. Natl. Acad. Sci. U.S.A.">
        <title>Complete genomes of two clinical Staphylococcus aureus strains: evidence for the rapid evolution of virulence and drug resistance.</title>
        <authorList>
            <person name="Holden M.T.G."/>
            <person name="Feil E.J."/>
            <person name="Lindsay J.A."/>
            <person name="Peacock S.J."/>
            <person name="Day N.P.J."/>
            <person name="Enright M.C."/>
            <person name="Foster T.J."/>
            <person name="Moore C.E."/>
            <person name="Hurst L."/>
            <person name="Atkin R."/>
            <person name="Barron A."/>
            <person name="Bason N."/>
            <person name="Bentley S.D."/>
            <person name="Chillingworth C."/>
            <person name="Chillingworth T."/>
            <person name="Churcher C."/>
            <person name="Clark L."/>
            <person name="Corton C."/>
            <person name="Cronin A."/>
            <person name="Doggett J."/>
            <person name="Dowd L."/>
            <person name="Feltwell T."/>
            <person name="Hance Z."/>
            <person name="Harris B."/>
            <person name="Hauser H."/>
            <person name="Holroyd S."/>
            <person name="Jagels K."/>
            <person name="James K.D."/>
            <person name="Lennard N."/>
            <person name="Line A."/>
            <person name="Mayes R."/>
            <person name="Moule S."/>
            <person name="Mungall K."/>
            <person name="Ormond D."/>
            <person name="Quail M.A."/>
            <person name="Rabbinowitsch E."/>
            <person name="Rutherford K.M."/>
            <person name="Sanders M."/>
            <person name="Sharp S."/>
            <person name="Simmonds M."/>
            <person name="Stevens K."/>
            <person name="Whitehead S."/>
            <person name="Barrell B.G."/>
            <person name="Spratt B.G."/>
            <person name="Parkhill J."/>
        </authorList>
    </citation>
    <scope>NUCLEOTIDE SEQUENCE [LARGE SCALE GENOMIC DNA]</scope>
    <source>
        <strain>MRSA252</strain>
    </source>
</reference>
<keyword id="KW-0067">ATP-binding</keyword>
<keyword id="KW-0143">Chaperone</keyword>
<keyword id="KW-0547">Nucleotide-binding</keyword>
<keyword id="KW-0677">Repeat</keyword>
<keyword id="KW-0346">Stress response</keyword>
<protein>
    <recommendedName>
        <fullName>ATP-dependent Clp protease ATP-binding subunit ClpC</fullName>
    </recommendedName>
</protein>
<feature type="chain" id="PRO_0000269685" description="ATP-dependent Clp protease ATP-binding subunit ClpC">
    <location>
        <begin position="1"/>
        <end position="818"/>
    </location>
</feature>
<feature type="domain" description="Clp R" evidence="4">
    <location>
        <begin position="3"/>
        <end position="144"/>
    </location>
</feature>
<feature type="domain" description="UVR" evidence="3">
    <location>
        <begin position="417"/>
        <end position="452"/>
    </location>
</feature>
<feature type="region of interest" description="Repeat 1" evidence="4">
    <location>
        <begin position="6"/>
        <end position="71"/>
    </location>
</feature>
<feature type="region of interest" description="Repeat 2" evidence="4">
    <location>
        <begin position="80"/>
        <end position="144"/>
    </location>
</feature>
<feature type="region of interest" description="I">
    <location>
        <begin position="163"/>
        <end position="410"/>
    </location>
</feature>
<feature type="region of interest" description="II">
    <location>
        <begin position="471"/>
        <end position="662"/>
    </location>
</feature>
<feature type="binding site" evidence="2">
    <location>
        <begin position="208"/>
        <end position="215"/>
    </location>
    <ligand>
        <name>ATP</name>
        <dbReference type="ChEBI" id="CHEBI:30616"/>
    </ligand>
</feature>
<feature type="binding site" evidence="2">
    <location>
        <begin position="545"/>
        <end position="552"/>
    </location>
    <ligand>
        <name>ATP</name>
        <dbReference type="ChEBI" id="CHEBI:30616"/>
    </ligand>
</feature>
<comment type="function">
    <text evidence="1">Required for growth at high temperatures, probably by acting as a chaperone during heat shock and targeting heat-denatured proteins for degradation by ClpP.</text>
</comment>
<comment type="similarity">
    <text evidence="5">Belongs to the ClpA/ClpB family. ClpC subfamily.</text>
</comment>
<gene>
    <name type="primary">clpC</name>
    <name type="ordered locus">SAR0528</name>
</gene>